<organism>
    <name type="scientific">Staphylococcus aureus (strain N315)</name>
    <dbReference type="NCBI Taxonomy" id="158879"/>
    <lineage>
        <taxon>Bacteria</taxon>
        <taxon>Bacillati</taxon>
        <taxon>Bacillota</taxon>
        <taxon>Bacilli</taxon>
        <taxon>Bacillales</taxon>
        <taxon>Staphylococcaceae</taxon>
        <taxon>Staphylococcus</taxon>
    </lineage>
</organism>
<evidence type="ECO:0000255" key="1">
    <source>
        <dbReference type="HAMAP-Rule" id="MF_00372"/>
    </source>
</evidence>
<name>HUTI_STAAN</name>
<keyword id="KW-0963">Cytoplasm</keyword>
<keyword id="KW-0369">Histidine metabolism</keyword>
<keyword id="KW-0378">Hydrolase</keyword>
<keyword id="KW-0408">Iron</keyword>
<keyword id="KW-0479">Metal-binding</keyword>
<keyword id="KW-0862">Zinc</keyword>
<feature type="chain" id="PRO_0000160960" description="Imidazolonepropionase">
    <location>
        <begin position="1"/>
        <end position="412"/>
    </location>
</feature>
<feature type="binding site" evidence="1">
    <location>
        <position position="76"/>
    </location>
    <ligand>
        <name>Fe(3+)</name>
        <dbReference type="ChEBI" id="CHEBI:29034"/>
    </ligand>
</feature>
<feature type="binding site" evidence="1">
    <location>
        <position position="76"/>
    </location>
    <ligand>
        <name>Zn(2+)</name>
        <dbReference type="ChEBI" id="CHEBI:29105"/>
    </ligand>
</feature>
<feature type="binding site" evidence="1">
    <location>
        <position position="78"/>
    </location>
    <ligand>
        <name>Fe(3+)</name>
        <dbReference type="ChEBI" id="CHEBI:29034"/>
    </ligand>
</feature>
<feature type="binding site" evidence="1">
    <location>
        <position position="78"/>
    </location>
    <ligand>
        <name>Zn(2+)</name>
        <dbReference type="ChEBI" id="CHEBI:29105"/>
    </ligand>
</feature>
<feature type="binding site" evidence="1">
    <location>
        <position position="85"/>
    </location>
    <ligand>
        <name>4-imidazolone-5-propanoate</name>
        <dbReference type="ChEBI" id="CHEBI:77893"/>
    </ligand>
</feature>
<feature type="binding site" evidence="1">
    <location>
        <position position="148"/>
    </location>
    <ligand>
        <name>4-imidazolone-5-propanoate</name>
        <dbReference type="ChEBI" id="CHEBI:77893"/>
    </ligand>
</feature>
<feature type="binding site" evidence="1">
    <location>
        <position position="148"/>
    </location>
    <ligand>
        <name>N-formimidoyl-L-glutamate</name>
        <dbReference type="ChEBI" id="CHEBI:58928"/>
    </ligand>
</feature>
<feature type="binding site" evidence="1">
    <location>
        <position position="181"/>
    </location>
    <ligand>
        <name>4-imidazolone-5-propanoate</name>
        <dbReference type="ChEBI" id="CHEBI:77893"/>
    </ligand>
</feature>
<feature type="binding site" evidence="1">
    <location>
        <position position="242"/>
    </location>
    <ligand>
        <name>Fe(3+)</name>
        <dbReference type="ChEBI" id="CHEBI:29034"/>
    </ligand>
</feature>
<feature type="binding site" evidence="1">
    <location>
        <position position="242"/>
    </location>
    <ligand>
        <name>Zn(2+)</name>
        <dbReference type="ChEBI" id="CHEBI:29105"/>
    </ligand>
</feature>
<feature type="binding site" evidence="1">
    <location>
        <position position="245"/>
    </location>
    <ligand>
        <name>4-imidazolone-5-propanoate</name>
        <dbReference type="ChEBI" id="CHEBI:77893"/>
    </ligand>
</feature>
<feature type="binding site" evidence="1">
    <location>
        <position position="317"/>
    </location>
    <ligand>
        <name>Fe(3+)</name>
        <dbReference type="ChEBI" id="CHEBI:29034"/>
    </ligand>
</feature>
<feature type="binding site" evidence="1">
    <location>
        <position position="317"/>
    </location>
    <ligand>
        <name>Zn(2+)</name>
        <dbReference type="ChEBI" id="CHEBI:29105"/>
    </ligand>
</feature>
<feature type="binding site" evidence="1">
    <location>
        <position position="319"/>
    </location>
    <ligand>
        <name>N-formimidoyl-L-glutamate</name>
        <dbReference type="ChEBI" id="CHEBI:58928"/>
    </ligand>
</feature>
<feature type="binding site" evidence="1">
    <location>
        <position position="321"/>
    </location>
    <ligand>
        <name>N-formimidoyl-L-glutamate</name>
        <dbReference type="ChEBI" id="CHEBI:58928"/>
    </ligand>
</feature>
<feature type="binding site" evidence="1">
    <location>
        <position position="322"/>
    </location>
    <ligand>
        <name>4-imidazolone-5-propanoate</name>
        <dbReference type="ChEBI" id="CHEBI:77893"/>
    </ligand>
</feature>
<proteinExistence type="evidence at protein level"/>
<comment type="function">
    <text evidence="1">Catalyzes the hydrolytic cleavage of the carbon-nitrogen bond in imidazolone-5-propanoate to yield N-formimidoyl-L-glutamate. It is the third step in the universal histidine degradation pathway.</text>
</comment>
<comment type="catalytic activity">
    <reaction evidence="1">
        <text>4-imidazolone-5-propanoate + H2O = N-formimidoyl-L-glutamate</text>
        <dbReference type="Rhea" id="RHEA:23660"/>
        <dbReference type="ChEBI" id="CHEBI:15377"/>
        <dbReference type="ChEBI" id="CHEBI:58928"/>
        <dbReference type="ChEBI" id="CHEBI:77893"/>
        <dbReference type="EC" id="3.5.2.7"/>
    </reaction>
</comment>
<comment type="cofactor">
    <cofactor evidence="1">
        <name>Zn(2+)</name>
        <dbReference type="ChEBI" id="CHEBI:29105"/>
    </cofactor>
    <cofactor evidence="1">
        <name>Fe(3+)</name>
        <dbReference type="ChEBI" id="CHEBI:29034"/>
    </cofactor>
    <text evidence="1">Binds 1 zinc or iron ion per subunit.</text>
</comment>
<comment type="pathway">
    <text evidence="1">Amino-acid degradation; L-histidine degradation into L-glutamate; N-formimidoyl-L-glutamate from L-histidine: step 3/3.</text>
</comment>
<comment type="subcellular location">
    <subcellularLocation>
        <location evidence="1">Cytoplasm</location>
    </subcellularLocation>
</comment>
<comment type="similarity">
    <text evidence="1">Belongs to the metallo-dependent hydrolases superfamily. HutI family.</text>
</comment>
<protein>
    <recommendedName>
        <fullName evidence="1">Imidazolonepropionase</fullName>
        <ecNumber evidence="1">3.5.2.7</ecNumber>
    </recommendedName>
    <alternativeName>
        <fullName evidence="1">Imidazolone-5-propionate hydrolase</fullName>
    </alternativeName>
</protein>
<sequence>MNDLIINHIAELILPKSTDKPLKGKELDELNVVKNGTVVIKDGKIVYAGQHTDDYDATETIDASGKVVSPALVDAHTHLTFGGSREHEMSLKRQGKSYLEILEMGGGILSTVNATRETSEDDLFKKAEHDLLTMIKHGVLAVESKSGYGLDRENELKQLKVSNRLAEKYDLDMKHTFLGPHAVPKEASSNEAFLEEMIALLPEVKQYADFADIFCETGVFTIEQSQHYMQKAKEAGFKVKIHADEIDPLGGLELAIDEQAISADHLVASSDKGKEKLRNSDTVAVLLPATTFYLGKEDYADARGMLDNNGAIALATDYNPGSSVTNNLQLVMAIAALKLKLSPSEVWNAVTVNAAKAIDINAGTINTGDKANLVIWDAPNHEYIPYHFGINHAEKVIKDGKVIVDNTLSFKA</sequence>
<accession>P64418</accession>
<accession>Q99RU3</accession>
<gene>
    <name evidence="1" type="primary">hutI</name>
    <name type="ordered locus">SA2121</name>
</gene>
<dbReference type="EC" id="3.5.2.7" evidence="1"/>
<dbReference type="EMBL" id="BA000018">
    <property type="protein sequence ID" value="BAB43422.1"/>
    <property type="molecule type" value="Genomic_DNA"/>
</dbReference>
<dbReference type="PIR" id="E90032">
    <property type="entry name" value="E90032"/>
</dbReference>
<dbReference type="RefSeq" id="WP_000998753.1">
    <property type="nucleotide sequence ID" value="NC_002745.2"/>
</dbReference>
<dbReference type="SMR" id="P64418"/>
<dbReference type="EnsemblBacteria" id="BAB43422">
    <property type="protein sequence ID" value="BAB43422"/>
    <property type="gene ID" value="BAB43422"/>
</dbReference>
<dbReference type="KEGG" id="sau:SA2121"/>
<dbReference type="HOGENOM" id="CLU_041647_0_1_9"/>
<dbReference type="UniPathway" id="UPA00379">
    <property type="reaction ID" value="UER00551"/>
</dbReference>
<dbReference type="GO" id="GO:0005737">
    <property type="term" value="C:cytoplasm"/>
    <property type="evidence" value="ECO:0007669"/>
    <property type="project" value="UniProtKB-SubCell"/>
</dbReference>
<dbReference type="GO" id="GO:0050480">
    <property type="term" value="F:imidazolonepropionase activity"/>
    <property type="evidence" value="ECO:0007669"/>
    <property type="project" value="UniProtKB-UniRule"/>
</dbReference>
<dbReference type="GO" id="GO:0005506">
    <property type="term" value="F:iron ion binding"/>
    <property type="evidence" value="ECO:0007669"/>
    <property type="project" value="UniProtKB-UniRule"/>
</dbReference>
<dbReference type="GO" id="GO:0008270">
    <property type="term" value="F:zinc ion binding"/>
    <property type="evidence" value="ECO:0007669"/>
    <property type="project" value="UniProtKB-UniRule"/>
</dbReference>
<dbReference type="GO" id="GO:0019556">
    <property type="term" value="P:L-histidine catabolic process to glutamate and formamide"/>
    <property type="evidence" value="ECO:0007669"/>
    <property type="project" value="UniProtKB-UniPathway"/>
</dbReference>
<dbReference type="GO" id="GO:0019557">
    <property type="term" value="P:L-histidine catabolic process to glutamate and formate"/>
    <property type="evidence" value="ECO:0007669"/>
    <property type="project" value="UniProtKB-UniPathway"/>
</dbReference>
<dbReference type="CDD" id="cd01296">
    <property type="entry name" value="Imidazolone-5PH"/>
    <property type="match status" value="1"/>
</dbReference>
<dbReference type="FunFam" id="3.20.20.140:FF:000007">
    <property type="entry name" value="Imidazolonepropionase"/>
    <property type="match status" value="1"/>
</dbReference>
<dbReference type="Gene3D" id="3.20.20.140">
    <property type="entry name" value="Metal-dependent hydrolases"/>
    <property type="match status" value="1"/>
</dbReference>
<dbReference type="Gene3D" id="2.30.40.10">
    <property type="entry name" value="Urease, subunit C, domain 1"/>
    <property type="match status" value="1"/>
</dbReference>
<dbReference type="HAMAP" id="MF_00372">
    <property type="entry name" value="HutI"/>
    <property type="match status" value="1"/>
</dbReference>
<dbReference type="InterPro" id="IPR006680">
    <property type="entry name" value="Amidohydro-rel"/>
</dbReference>
<dbReference type="InterPro" id="IPR005920">
    <property type="entry name" value="HutI"/>
</dbReference>
<dbReference type="InterPro" id="IPR011059">
    <property type="entry name" value="Metal-dep_hydrolase_composite"/>
</dbReference>
<dbReference type="InterPro" id="IPR032466">
    <property type="entry name" value="Metal_Hydrolase"/>
</dbReference>
<dbReference type="NCBIfam" id="TIGR01224">
    <property type="entry name" value="hutI"/>
    <property type="match status" value="1"/>
</dbReference>
<dbReference type="PANTHER" id="PTHR42752">
    <property type="entry name" value="IMIDAZOLONEPROPIONASE"/>
    <property type="match status" value="1"/>
</dbReference>
<dbReference type="PANTHER" id="PTHR42752:SF1">
    <property type="entry name" value="IMIDAZOLONEPROPIONASE-RELATED"/>
    <property type="match status" value="1"/>
</dbReference>
<dbReference type="Pfam" id="PF01979">
    <property type="entry name" value="Amidohydro_1"/>
    <property type="match status" value="1"/>
</dbReference>
<dbReference type="SUPFAM" id="SSF51338">
    <property type="entry name" value="Composite domain of metallo-dependent hydrolases"/>
    <property type="match status" value="1"/>
</dbReference>
<dbReference type="SUPFAM" id="SSF51556">
    <property type="entry name" value="Metallo-dependent hydrolases"/>
    <property type="match status" value="1"/>
</dbReference>
<reference key="1">
    <citation type="journal article" date="2001" name="Lancet">
        <title>Whole genome sequencing of meticillin-resistant Staphylococcus aureus.</title>
        <authorList>
            <person name="Kuroda M."/>
            <person name="Ohta T."/>
            <person name="Uchiyama I."/>
            <person name="Baba T."/>
            <person name="Yuzawa H."/>
            <person name="Kobayashi I."/>
            <person name="Cui L."/>
            <person name="Oguchi A."/>
            <person name="Aoki K."/>
            <person name="Nagai Y."/>
            <person name="Lian J.-Q."/>
            <person name="Ito T."/>
            <person name="Kanamori M."/>
            <person name="Matsumaru H."/>
            <person name="Maruyama A."/>
            <person name="Murakami H."/>
            <person name="Hosoyama A."/>
            <person name="Mizutani-Ui Y."/>
            <person name="Takahashi N.K."/>
            <person name="Sawano T."/>
            <person name="Inoue R."/>
            <person name="Kaito C."/>
            <person name="Sekimizu K."/>
            <person name="Hirakawa H."/>
            <person name="Kuhara S."/>
            <person name="Goto S."/>
            <person name="Yabuzaki J."/>
            <person name="Kanehisa M."/>
            <person name="Yamashita A."/>
            <person name="Oshima K."/>
            <person name="Furuya K."/>
            <person name="Yoshino C."/>
            <person name="Shiba T."/>
            <person name="Hattori M."/>
            <person name="Ogasawara N."/>
            <person name="Hayashi H."/>
            <person name="Hiramatsu K."/>
        </authorList>
    </citation>
    <scope>NUCLEOTIDE SEQUENCE [LARGE SCALE GENOMIC DNA]</scope>
    <source>
        <strain>N315</strain>
    </source>
</reference>
<reference key="2">
    <citation type="submission" date="2007-10" db="UniProtKB">
        <title>Shotgun proteomic analysis of total and membrane protein extracts of S. aureus strain N315.</title>
        <authorList>
            <person name="Vaezzadeh A.R."/>
            <person name="Deshusses J."/>
            <person name="Lescuyer P."/>
            <person name="Hochstrasser D.F."/>
        </authorList>
    </citation>
    <scope>IDENTIFICATION BY MASS SPECTROMETRY [LARGE SCALE ANALYSIS]</scope>
    <source>
        <strain>N315</strain>
    </source>
</reference>